<feature type="chain" id="PRO_0000302694" description="ATP synthase subunit alpha">
    <location>
        <begin position="1"/>
        <end position="510"/>
    </location>
</feature>
<feature type="binding site" evidence="2">
    <location>
        <begin position="169"/>
        <end position="176"/>
    </location>
    <ligand>
        <name>ATP</name>
        <dbReference type="ChEBI" id="CHEBI:30616"/>
    </ligand>
</feature>
<feature type="site" description="Required for activity" evidence="2">
    <location>
        <position position="371"/>
    </location>
</feature>
<reference key="1">
    <citation type="submission" date="2006-03" db="EMBL/GenBank/DDBJ databases">
        <title>Complete sequence of Rhodopseudomonas palustris BisB5.</title>
        <authorList>
            <consortium name="US DOE Joint Genome Institute"/>
            <person name="Copeland A."/>
            <person name="Lucas S."/>
            <person name="Lapidus A."/>
            <person name="Barry K."/>
            <person name="Detter J.C."/>
            <person name="Glavina del Rio T."/>
            <person name="Hammon N."/>
            <person name="Israni S."/>
            <person name="Dalin E."/>
            <person name="Tice H."/>
            <person name="Pitluck S."/>
            <person name="Chain P."/>
            <person name="Malfatti S."/>
            <person name="Shin M."/>
            <person name="Vergez L."/>
            <person name="Schmutz J."/>
            <person name="Larimer F."/>
            <person name="Land M."/>
            <person name="Hauser L."/>
            <person name="Pelletier D.A."/>
            <person name="Kyrpides N."/>
            <person name="Lykidis A."/>
            <person name="Oda Y."/>
            <person name="Harwood C.S."/>
            <person name="Richardson P."/>
        </authorList>
    </citation>
    <scope>NUCLEOTIDE SEQUENCE [LARGE SCALE GENOMIC DNA]</scope>
    <source>
        <strain>BisB5</strain>
    </source>
</reference>
<proteinExistence type="inferred from homology"/>
<comment type="function">
    <text evidence="2">Produces ATP from ADP in the presence of a proton gradient across the membrane. The alpha chain is a regulatory subunit.</text>
</comment>
<comment type="catalytic activity">
    <reaction evidence="2">
        <text>ATP + H2O + 4 H(+)(in) = ADP + phosphate + 5 H(+)(out)</text>
        <dbReference type="Rhea" id="RHEA:57720"/>
        <dbReference type="ChEBI" id="CHEBI:15377"/>
        <dbReference type="ChEBI" id="CHEBI:15378"/>
        <dbReference type="ChEBI" id="CHEBI:30616"/>
        <dbReference type="ChEBI" id="CHEBI:43474"/>
        <dbReference type="ChEBI" id="CHEBI:456216"/>
        <dbReference type="EC" id="7.1.2.2"/>
    </reaction>
</comment>
<comment type="subunit">
    <text evidence="1">F-type ATPases have 2 components, CF(1) - the catalytic core - and CF(0) - the membrane proton channel. CF(1) has five subunits: alpha(3), beta(3), gamma(1), delta(1), epsilon(1). CF(0) has four main subunits: a(1), b(1), b'(1) and c(9-12) (By similarity).</text>
</comment>
<comment type="subcellular location">
    <subcellularLocation>
        <location evidence="2">Cell inner membrane</location>
        <topology evidence="2">Peripheral membrane protein</topology>
    </subcellularLocation>
</comment>
<comment type="similarity">
    <text evidence="2">Belongs to the ATPase alpha/beta chains family.</text>
</comment>
<gene>
    <name evidence="2" type="primary">atpA</name>
    <name type="ordered locus">RPD_0557</name>
</gene>
<name>ATPA_RHOPS</name>
<dbReference type="EC" id="7.1.2.2" evidence="2"/>
<dbReference type="EMBL" id="CP000283">
    <property type="protein sequence ID" value="ABE37795.1"/>
    <property type="molecule type" value="Genomic_DNA"/>
</dbReference>
<dbReference type="SMR" id="Q13DP4"/>
<dbReference type="STRING" id="316057.RPD_0557"/>
<dbReference type="KEGG" id="rpd:RPD_0557"/>
<dbReference type="eggNOG" id="COG0056">
    <property type="taxonomic scope" value="Bacteria"/>
</dbReference>
<dbReference type="HOGENOM" id="CLU_010091_2_1_5"/>
<dbReference type="BioCyc" id="RPAL316057:RPD_RS02860-MONOMER"/>
<dbReference type="Proteomes" id="UP000001818">
    <property type="component" value="Chromosome"/>
</dbReference>
<dbReference type="GO" id="GO:0005886">
    <property type="term" value="C:plasma membrane"/>
    <property type="evidence" value="ECO:0007669"/>
    <property type="project" value="UniProtKB-SubCell"/>
</dbReference>
<dbReference type="GO" id="GO:0045259">
    <property type="term" value="C:proton-transporting ATP synthase complex"/>
    <property type="evidence" value="ECO:0007669"/>
    <property type="project" value="UniProtKB-KW"/>
</dbReference>
<dbReference type="GO" id="GO:0043531">
    <property type="term" value="F:ADP binding"/>
    <property type="evidence" value="ECO:0007669"/>
    <property type="project" value="TreeGrafter"/>
</dbReference>
<dbReference type="GO" id="GO:0005524">
    <property type="term" value="F:ATP binding"/>
    <property type="evidence" value="ECO:0007669"/>
    <property type="project" value="UniProtKB-UniRule"/>
</dbReference>
<dbReference type="GO" id="GO:0046933">
    <property type="term" value="F:proton-transporting ATP synthase activity, rotational mechanism"/>
    <property type="evidence" value="ECO:0007669"/>
    <property type="project" value="UniProtKB-UniRule"/>
</dbReference>
<dbReference type="CDD" id="cd18113">
    <property type="entry name" value="ATP-synt_F1_alpha_C"/>
    <property type="match status" value="1"/>
</dbReference>
<dbReference type="CDD" id="cd18116">
    <property type="entry name" value="ATP-synt_F1_alpha_N"/>
    <property type="match status" value="1"/>
</dbReference>
<dbReference type="CDD" id="cd01132">
    <property type="entry name" value="F1-ATPase_alpha_CD"/>
    <property type="match status" value="1"/>
</dbReference>
<dbReference type="FunFam" id="1.20.150.20:FF:000001">
    <property type="entry name" value="ATP synthase subunit alpha"/>
    <property type="match status" value="1"/>
</dbReference>
<dbReference type="FunFam" id="2.40.30.20:FF:000001">
    <property type="entry name" value="ATP synthase subunit alpha"/>
    <property type="match status" value="1"/>
</dbReference>
<dbReference type="FunFam" id="3.40.50.300:FF:002432">
    <property type="entry name" value="ATP synthase subunit alpha, mitochondrial"/>
    <property type="match status" value="1"/>
</dbReference>
<dbReference type="Gene3D" id="2.40.30.20">
    <property type="match status" value="1"/>
</dbReference>
<dbReference type="Gene3D" id="1.20.150.20">
    <property type="entry name" value="ATP synthase alpha/beta chain, C-terminal domain"/>
    <property type="match status" value="1"/>
</dbReference>
<dbReference type="Gene3D" id="3.40.50.300">
    <property type="entry name" value="P-loop containing nucleotide triphosphate hydrolases"/>
    <property type="match status" value="1"/>
</dbReference>
<dbReference type="HAMAP" id="MF_01346">
    <property type="entry name" value="ATP_synth_alpha_bact"/>
    <property type="match status" value="1"/>
</dbReference>
<dbReference type="InterPro" id="IPR023366">
    <property type="entry name" value="ATP_synth_asu-like_sf"/>
</dbReference>
<dbReference type="InterPro" id="IPR000793">
    <property type="entry name" value="ATP_synth_asu_C"/>
</dbReference>
<dbReference type="InterPro" id="IPR038376">
    <property type="entry name" value="ATP_synth_asu_C_sf"/>
</dbReference>
<dbReference type="InterPro" id="IPR033732">
    <property type="entry name" value="ATP_synth_F1_a_nt-bd_dom"/>
</dbReference>
<dbReference type="InterPro" id="IPR005294">
    <property type="entry name" value="ATP_synth_F1_asu"/>
</dbReference>
<dbReference type="InterPro" id="IPR020003">
    <property type="entry name" value="ATPase_a/bsu_AS"/>
</dbReference>
<dbReference type="InterPro" id="IPR004100">
    <property type="entry name" value="ATPase_F1/V1/A1_a/bsu_N"/>
</dbReference>
<dbReference type="InterPro" id="IPR036121">
    <property type="entry name" value="ATPase_F1/V1/A1_a/bsu_N_sf"/>
</dbReference>
<dbReference type="InterPro" id="IPR000194">
    <property type="entry name" value="ATPase_F1/V1/A1_a/bsu_nucl-bd"/>
</dbReference>
<dbReference type="InterPro" id="IPR027417">
    <property type="entry name" value="P-loop_NTPase"/>
</dbReference>
<dbReference type="NCBIfam" id="TIGR00962">
    <property type="entry name" value="atpA"/>
    <property type="match status" value="1"/>
</dbReference>
<dbReference type="NCBIfam" id="NF009884">
    <property type="entry name" value="PRK13343.1"/>
    <property type="match status" value="1"/>
</dbReference>
<dbReference type="PANTHER" id="PTHR48082">
    <property type="entry name" value="ATP SYNTHASE SUBUNIT ALPHA, MITOCHONDRIAL"/>
    <property type="match status" value="1"/>
</dbReference>
<dbReference type="PANTHER" id="PTHR48082:SF2">
    <property type="entry name" value="ATP SYNTHASE SUBUNIT ALPHA, MITOCHONDRIAL"/>
    <property type="match status" value="1"/>
</dbReference>
<dbReference type="Pfam" id="PF00006">
    <property type="entry name" value="ATP-synt_ab"/>
    <property type="match status" value="1"/>
</dbReference>
<dbReference type="Pfam" id="PF00306">
    <property type="entry name" value="ATP-synt_ab_C"/>
    <property type="match status" value="1"/>
</dbReference>
<dbReference type="Pfam" id="PF02874">
    <property type="entry name" value="ATP-synt_ab_N"/>
    <property type="match status" value="1"/>
</dbReference>
<dbReference type="PIRSF" id="PIRSF039088">
    <property type="entry name" value="F_ATPase_subunit_alpha"/>
    <property type="match status" value="1"/>
</dbReference>
<dbReference type="SUPFAM" id="SSF47917">
    <property type="entry name" value="C-terminal domain of alpha and beta subunits of F1 ATP synthase"/>
    <property type="match status" value="1"/>
</dbReference>
<dbReference type="SUPFAM" id="SSF50615">
    <property type="entry name" value="N-terminal domain of alpha and beta subunits of F1 ATP synthase"/>
    <property type="match status" value="1"/>
</dbReference>
<dbReference type="SUPFAM" id="SSF52540">
    <property type="entry name" value="P-loop containing nucleoside triphosphate hydrolases"/>
    <property type="match status" value="1"/>
</dbReference>
<dbReference type="PROSITE" id="PS00152">
    <property type="entry name" value="ATPASE_ALPHA_BETA"/>
    <property type="match status" value="1"/>
</dbReference>
<protein>
    <recommendedName>
        <fullName evidence="2">ATP synthase subunit alpha</fullName>
        <ecNumber evidence="2">7.1.2.2</ecNumber>
    </recommendedName>
    <alternativeName>
        <fullName evidence="2">ATP synthase F1 sector subunit alpha</fullName>
    </alternativeName>
    <alternativeName>
        <fullName evidence="2">F-ATPase subunit alpha</fullName>
    </alternativeName>
</protein>
<accession>Q13DP4</accession>
<keyword id="KW-0066">ATP synthesis</keyword>
<keyword id="KW-0067">ATP-binding</keyword>
<keyword id="KW-0997">Cell inner membrane</keyword>
<keyword id="KW-1003">Cell membrane</keyword>
<keyword id="KW-0139">CF(1)</keyword>
<keyword id="KW-0375">Hydrogen ion transport</keyword>
<keyword id="KW-0406">Ion transport</keyword>
<keyword id="KW-0472">Membrane</keyword>
<keyword id="KW-0547">Nucleotide-binding</keyword>
<keyword id="KW-1278">Translocase</keyword>
<keyword id="KW-0813">Transport</keyword>
<organism>
    <name type="scientific">Rhodopseudomonas palustris (strain BisB5)</name>
    <dbReference type="NCBI Taxonomy" id="316057"/>
    <lineage>
        <taxon>Bacteria</taxon>
        <taxon>Pseudomonadati</taxon>
        <taxon>Pseudomonadota</taxon>
        <taxon>Alphaproteobacteria</taxon>
        <taxon>Hyphomicrobiales</taxon>
        <taxon>Nitrobacteraceae</taxon>
        <taxon>Rhodopseudomonas</taxon>
    </lineage>
</organism>
<evidence type="ECO:0000250" key="1"/>
<evidence type="ECO:0000255" key="2">
    <source>
        <dbReference type="HAMAP-Rule" id="MF_01346"/>
    </source>
</evidence>
<sequence length="510" mass="55158">MDIRAAEISAILKDQIKNFGQEAEVTEVGQVLSVGDGIARVYGLDNVLAGEMVEFENGTRGMALNLETDNVGIVIFGADREIKEGQTVKRTRSIVDTPVGKGLLGRVVDALGNPIDGKGPIQATERKRVDVKAPGIIPRKSVNEPMATGLKAIDALIPVGRGQRELIIGDRQTGKTAIALDTILNQKPLNVEGAPEGQKLYCVYVAVGQKRSTVAQFVKVLEEQGALEYSIVVAATASDPAPMQYIAPFTGCTMGEYFRDNGMHAVIIYDDLSKQAVAYRQMSLLLRRPPGREAYPGDVFYLHSRLLERAAKLNEDHGSGSLTALPIIETQANDVSAYIPTNVISITDGQIFLETDLFFQGIRPAVNVGLSVSRVGSSAQTKAMKKVAGKIKGELAQYREMAAFAQFGSDLDASTQRLLNRGSRLTELLKQPQFSPLKMEEQVVVIYAGVNGYLDALPVAKVRSFEDGLLSLLRGKESAILDAIRTSRDLSDDTAAKLKAVIESYAKTFA</sequence>